<sequence>MKDNIHPDYHEINVVMTDGTEYKTRSTMGKAGDTLRLDIDPKSHPAWTGVHRMVDTAGQLAKFKKRFEGFGIKSDNS</sequence>
<proteinExistence type="inferred from homology"/>
<gene>
    <name evidence="1" type="primary">rpmE</name>
    <name type="ordered locus">amb3038</name>
</gene>
<feature type="chain" id="PRO_0000259194" description="Large ribosomal subunit protein bL31">
    <location>
        <begin position="1"/>
        <end position="77"/>
    </location>
</feature>
<evidence type="ECO:0000255" key="1">
    <source>
        <dbReference type="HAMAP-Rule" id="MF_00501"/>
    </source>
</evidence>
<evidence type="ECO:0000305" key="2"/>
<keyword id="KW-0687">Ribonucleoprotein</keyword>
<keyword id="KW-0689">Ribosomal protein</keyword>
<keyword id="KW-0694">RNA-binding</keyword>
<keyword id="KW-0699">rRNA-binding</keyword>
<reference key="1">
    <citation type="journal article" date="2005" name="DNA Res.">
        <title>Complete genome sequence of the facultative anaerobic magnetotactic bacterium Magnetospirillum sp. strain AMB-1.</title>
        <authorList>
            <person name="Matsunaga T."/>
            <person name="Okamura Y."/>
            <person name="Fukuda Y."/>
            <person name="Wahyudi A.T."/>
            <person name="Murase Y."/>
            <person name="Takeyama H."/>
        </authorList>
    </citation>
    <scope>NUCLEOTIDE SEQUENCE [LARGE SCALE GENOMIC DNA]</scope>
    <source>
        <strain>ATCC 700264 / AMB-1</strain>
    </source>
</reference>
<comment type="function">
    <text evidence="1">Binds the 23S rRNA.</text>
</comment>
<comment type="subunit">
    <text evidence="1">Part of the 50S ribosomal subunit.</text>
</comment>
<comment type="similarity">
    <text evidence="1">Belongs to the bacterial ribosomal protein bL31 family. Type A subfamily.</text>
</comment>
<accession>Q2W2T3</accession>
<organism>
    <name type="scientific">Paramagnetospirillum magneticum (strain ATCC 700264 / AMB-1)</name>
    <name type="common">Magnetospirillum magneticum</name>
    <dbReference type="NCBI Taxonomy" id="342108"/>
    <lineage>
        <taxon>Bacteria</taxon>
        <taxon>Pseudomonadati</taxon>
        <taxon>Pseudomonadota</taxon>
        <taxon>Alphaproteobacteria</taxon>
        <taxon>Rhodospirillales</taxon>
        <taxon>Magnetospirillaceae</taxon>
        <taxon>Paramagnetospirillum</taxon>
    </lineage>
</organism>
<dbReference type="EMBL" id="AP007255">
    <property type="protein sequence ID" value="BAE51842.1"/>
    <property type="molecule type" value="Genomic_DNA"/>
</dbReference>
<dbReference type="RefSeq" id="WP_011385414.1">
    <property type="nucleotide sequence ID" value="NC_007626.1"/>
</dbReference>
<dbReference type="STRING" id="342108.amb3038"/>
<dbReference type="KEGG" id="mag:amb3038"/>
<dbReference type="HOGENOM" id="CLU_114306_3_2_5"/>
<dbReference type="OrthoDB" id="9803251at2"/>
<dbReference type="Proteomes" id="UP000007058">
    <property type="component" value="Chromosome"/>
</dbReference>
<dbReference type="GO" id="GO:1990904">
    <property type="term" value="C:ribonucleoprotein complex"/>
    <property type="evidence" value="ECO:0007669"/>
    <property type="project" value="UniProtKB-KW"/>
</dbReference>
<dbReference type="GO" id="GO:0005840">
    <property type="term" value="C:ribosome"/>
    <property type="evidence" value="ECO:0007669"/>
    <property type="project" value="UniProtKB-KW"/>
</dbReference>
<dbReference type="GO" id="GO:0019843">
    <property type="term" value="F:rRNA binding"/>
    <property type="evidence" value="ECO:0007669"/>
    <property type="project" value="UniProtKB-KW"/>
</dbReference>
<dbReference type="GO" id="GO:0003735">
    <property type="term" value="F:structural constituent of ribosome"/>
    <property type="evidence" value="ECO:0007669"/>
    <property type="project" value="InterPro"/>
</dbReference>
<dbReference type="GO" id="GO:0006412">
    <property type="term" value="P:translation"/>
    <property type="evidence" value="ECO:0007669"/>
    <property type="project" value="UniProtKB-UniRule"/>
</dbReference>
<dbReference type="Gene3D" id="4.10.830.30">
    <property type="entry name" value="Ribosomal protein L31"/>
    <property type="match status" value="1"/>
</dbReference>
<dbReference type="HAMAP" id="MF_00501">
    <property type="entry name" value="Ribosomal_bL31_1"/>
    <property type="match status" value="1"/>
</dbReference>
<dbReference type="InterPro" id="IPR034704">
    <property type="entry name" value="Ribosomal_bL28/bL31-like_sf"/>
</dbReference>
<dbReference type="InterPro" id="IPR002150">
    <property type="entry name" value="Ribosomal_bL31"/>
</dbReference>
<dbReference type="InterPro" id="IPR027491">
    <property type="entry name" value="Ribosomal_bL31_A"/>
</dbReference>
<dbReference type="InterPro" id="IPR042105">
    <property type="entry name" value="Ribosomal_bL31_sf"/>
</dbReference>
<dbReference type="NCBIfam" id="TIGR00105">
    <property type="entry name" value="L31"/>
    <property type="match status" value="1"/>
</dbReference>
<dbReference type="NCBIfam" id="NF001809">
    <property type="entry name" value="PRK00528.1"/>
    <property type="match status" value="1"/>
</dbReference>
<dbReference type="PANTHER" id="PTHR33280">
    <property type="entry name" value="50S RIBOSOMAL PROTEIN L31, CHLOROPLASTIC"/>
    <property type="match status" value="1"/>
</dbReference>
<dbReference type="PANTHER" id="PTHR33280:SF6">
    <property type="entry name" value="LARGE RIBOSOMAL SUBUNIT PROTEIN BL31A"/>
    <property type="match status" value="1"/>
</dbReference>
<dbReference type="Pfam" id="PF01197">
    <property type="entry name" value="Ribosomal_L31"/>
    <property type="match status" value="1"/>
</dbReference>
<dbReference type="PRINTS" id="PR01249">
    <property type="entry name" value="RIBOSOMALL31"/>
</dbReference>
<dbReference type="SUPFAM" id="SSF143800">
    <property type="entry name" value="L28p-like"/>
    <property type="match status" value="1"/>
</dbReference>
<dbReference type="PROSITE" id="PS01143">
    <property type="entry name" value="RIBOSOMAL_L31"/>
    <property type="match status" value="1"/>
</dbReference>
<protein>
    <recommendedName>
        <fullName evidence="1">Large ribosomal subunit protein bL31</fullName>
    </recommendedName>
    <alternativeName>
        <fullName evidence="2">50S ribosomal protein L31</fullName>
    </alternativeName>
</protein>
<name>RL31_PARM1</name>